<evidence type="ECO:0000255" key="1">
    <source>
        <dbReference type="HAMAP-Rule" id="MF_00095"/>
    </source>
</evidence>
<keyword id="KW-1185">Reference proteome</keyword>
<sequence>MNLPPLTPATLIRRYKRFLADCALASGEIITVHCPNSGSMRSCAEPGQPILISQSGNPKRKLPWTWELYWSGASWVCINTQHPNAVVAEAIAAGDIPALQNYAQLRREVPYGSHERVDVLLSSEGRPPCYVEVKSCTLLEEDGVIRFPDAVSSRALRHLGALTEVVRGGGRAVMLFLIGREDGRGFAPADAIDPAYGKALRRARTDGVEILAYRTRLSPDKISLSVAEPLLF</sequence>
<dbReference type="EMBL" id="CP001219">
    <property type="protein sequence ID" value="ACK79955.1"/>
    <property type="molecule type" value="Genomic_DNA"/>
</dbReference>
<dbReference type="RefSeq" id="WP_012536441.1">
    <property type="nucleotide sequence ID" value="NC_011761.1"/>
</dbReference>
<dbReference type="SMR" id="B7J7A3"/>
<dbReference type="STRING" id="243159.AFE_0926"/>
<dbReference type="PaxDb" id="243159-AFE_0926"/>
<dbReference type="GeneID" id="65280248"/>
<dbReference type="KEGG" id="afr:AFE_0926"/>
<dbReference type="eggNOG" id="COG1489">
    <property type="taxonomic scope" value="Bacteria"/>
</dbReference>
<dbReference type="HOGENOM" id="CLU_052299_2_0_6"/>
<dbReference type="Proteomes" id="UP000001362">
    <property type="component" value="Chromosome"/>
</dbReference>
<dbReference type="GO" id="GO:0003677">
    <property type="term" value="F:DNA binding"/>
    <property type="evidence" value="ECO:0007669"/>
    <property type="project" value="InterPro"/>
</dbReference>
<dbReference type="CDD" id="cd22359">
    <property type="entry name" value="SfsA-like_bacterial"/>
    <property type="match status" value="1"/>
</dbReference>
<dbReference type="Gene3D" id="2.40.50.580">
    <property type="match status" value="1"/>
</dbReference>
<dbReference type="Gene3D" id="3.40.1350.60">
    <property type="match status" value="1"/>
</dbReference>
<dbReference type="HAMAP" id="MF_00095">
    <property type="entry name" value="SfsA"/>
    <property type="match status" value="1"/>
</dbReference>
<dbReference type="InterPro" id="IPR005224">
    <property type="entry name" value="SfsA"/>
</dbReference>
<dbReference type="InterPro" id="IPR040452">
    <property type="entry name" value="SfsA_C"/>
</dbReference>
<dbReference type="InterPro" id="IPR041465">
    <property type="entry name" value="SfsA_N"/>
</dbReference>
<dbReference type="NCBIfam" id="TIGR00230">
    <property type="entry name" value="sfsA"/>
    <property type="match status" value="1"/>
</dbReference>
<dbReference type="PANTHER" id="PTHR30545">
    <property type="entry name" value="SUGAR FERMENTATION STIMULATION PROTEIN A"/>
    <property type="match status" value="1"/>
</dbReference>
<dbReference type="PANTHER" id="PTHR30545:SF2">
    <property type="entry name" value="SUGAR FERMENTATION STIMULATION PROTEIN A"/>
    <property type="match status" value="1"/>
</dbReference>
<dbReference type="Pfam" id="PF03749">
    <property type="entry name" value="SfsA"/>
    <property type="match status" value="1"/>
</dbReference>
<dbReference type="Pfam" id="PF17746">
    <property type="entry name" value="SfsA_N"/>
    <property type="match status" value="1"/>
</dbReference>
<reference key="1">
    <citation type="journal article" date="2008" name="BMC Genomics">
        <title>Acidithiobacillus ferrooxidans metabolism: from genome sequence to industrial applications.</title>
        <authorList>
            <person name="Valdes J."/>
            <person name="Pedroso I."/>
            <person name="Quatrini R."/>
            <person name="Dodson R.J."/>
            <person name="Tettelin H."/>
            <person name="Blake R. II"/>
            <person name="Eisen J.A."/>
            <person name="Holmes D.S."/>
        </authorList>
    </citation>
    <scope>NUCLEOTIDE SEQUENCE [LARGE SCALE GENOMIC DNA]</scope>
    <source>
        <strain>ATCC 23270 / DSM 14882 / CIP 104768 / NCIMB 8455</strain>
    </source>
</reference>
<organism>
    <name type="scientific">Acidithiobacillus ferrooxidans (strain ATCC 23270 / DSM 14882 / CIP 104768 / NCIMB 8455)</name>
    <name type="common">Ferrobacillus ferrooxidans (strain ATCC 23270)</name>
    <dbReference type="NCBI Taxonomy" id="243159"/>
    <lineage>
        <taxon>Bacteria</taxon>
        <taxon>Pseudomonadati</taxon>
        <taxon>Pseudomonadota</taxon>
        <taxon>Acidithiobacillia</taxon>
        <taxon>Acidithiobacillales</taxon>
        <taxon>Acidithiobacillaceae</taxon>
        <taxon>Acidithiobacillus</taxon>
    </lineage>
</organism>
<comment type="similarity">
    <text evidence="1">Belongs to the SfsA family.</text>
</comment>
<proteinExistence type="inferred from homology"/>
<protein>
    <recommendedName>
        <fullName evidence="1">Sugar fermentation stimulation protein homolog</fullName>
    </recommendedName>
</protein>
<accession>B7J7A3</accession>
<gene>
    <name evidence="1" type="primary">sfsA</name>
    <name type="ordered locus">AFE_0926</name>
</gene>
<feature type="chain" id="PRO_1000196956" description="Sugar fermentation stimulation protein homolog">
    <location>
        <begin position="1"/>
        <end position="232"/>
    </location>
</feature>
<name>SFSA_ACIF2</name>